<gene>
    <name type="ordered locus">SAV0954</name>
</gene>
<proteinExistence type="inferred from homology"/>
<accession>Q99VD4</accession>
<dbReference type="EC" id="5.2.1.8"/>
<dbReference type="EMBL" id="BA000017">
    <property type="protein sequence ID" value="BAB57116.1"/>
    <property type="molecule type" value="Genomic_DNA"/>
</dbReference>
<dbReference type="RefSeq" id="WP_000035058.1">
    <property type="nucleotide sequence ID" value="NC_002758.2"/>
</dbReference>
<dbReference type="SMR" id="Q99VD4"/>
<dbReference type="KEGG" id="sav:SAV0954"/>
<dbReference type="HOGENOM" id="CLU_012062_16_0_9"/>
<dbReference type="PhylomeDB" id="Q99VD4"/>
<dbReference type="Proteomes" id="UP000002481">
    <property type="component" value="Chromosome"/>
</dbReference>
<dbReference type="GO" id="GO:0003755">
    <property type="term" value="F:peptidyl-prolyl cis-trans isomerase activity"/>
    <property type="evidence" value="ECO:0007669"/>
    <property type="project" value="UniProtKB-KW"/>
</dbReference>
<dbReference type="Gene3D" id="2.40.100.10">
    <property type="entry name" value="Cyclophilin-like"/>
    <property type="match status" value="1"/>
</dbReference>
<dbReference type="InterPro" id="IPR029000">
    <property type="entry name" value="Cyclophilin-like_dom_sf"/>
</dbReference>
<dbReference type="InterPro" id="IPR024936">
    <property type="entry name" value="Cyclophilin-type_PPIase"/>
</dbReference>
<dbReference type="InterPro" id="IPR002130">
    <property type="entry name" value="Cyclophilin-type_PPIase_dom"/>
</dbReference>
<dbReference type="InterPro" id="IPR044666">
    <property type="entry name" value="Cyclophilin_A-like"/>
</dbReference>
<dbReference type="PANTHER" id="PTHR45625">
    <property type="entry name" value="PEPTIDYL-PROLYL CIS-TRANS ISOMERASE-RELATED"/>
    <property type="match status" value="1"/>
</dbReference>
<dbReference type="PANTHER" id="PTHR45625:SF4">
    <property type="entry name" value="PEPTIDYLPROLYL ISOMERASE DOMAIN AND WD REPEAT-CONTAINING PROTEIN 1"/>
    <property type="match status" value="1"/>
</dbReference>
<dbReference type="Pfam" id="PF00160">
    <property type="entry name" value="Pro_isomerase"/>
    <property type="match status" value="1"/>
</dbReference>
<dbReference type="PIRSF" id="PIRSF001467">
    <property type="entry name" value="Peptidylpro_ismrse"/>
    <property type="match status" value="1"/>
</dbReference>
<dbReference type="PRINTS" id="PR00153">
    <property type="entry name" value="CSAPPISMRASE"/>
</dbReference>
<dbReference type="SUPFAM" id="SSF50891">
    <property type="entry name" value="Cyclophilin-like"/>
    <property type="match status" value="1"/>
</dbReference>
<dbReference type="PROSITE" id="PS50072">
    <property type="entry name" value="CSA_PPIASE_2"/>
    <property type="match status" value="1"/>
</dbReference>
<reference key="1">
    <citation type="journal article" date="2001" name="Lancet">
        <title>Whole genome sequencing of meticillin-resistant Staphylococcus aureus.</title>
        <authorList>
            <person name="Kuroda M."/>
            <person name="Ohta T."/>
            <person name="Uchiyama I."/>
            <person name="Baba T."/>
            <person name="Yuzawa H."/>
            <person name="Kobayashi I."/>
            <person name="Cui L."/>
            <person name="Oguchi A."/>
            <person name="Aoki K."/>
            <person name="Nagai Y."/>
            <person name="Lian J.-Q."/>
            <person name="Ito T."/>
            <person name="Kanamori M."/>
            <person name="Matsumaru H."/>
            <person name="Maruyama A."/>
            <person name="Murakami H."/>
            <person name="Hosoyama A."/>
            <person name="Mizutani-Ui Y."/>
            <person name="Takahashi N.K."/>
            <person name="Sawano T."/>
            <person name="Inoue R."/>
            <person name="Kaito C."/>
            <person name="Sekimizu K."/>
            <person name="Hirakawa H."/>
            <person name="Kuhara S."/>
            <person name="Goto S."/>
            <person name="Yabuzaki J."/>
            <person name="Kanehisa M."/>
            <person name="Yamashita A."/>
            <person name="Oshima K."/>
            <person name="Furuya K."/>
            <person name="Yoshino C."/>
            <person name="Shiba T."/>
            <person name="Hattori M."/>
            <person name="Ogasawara N."/>
            <person name="Hayashi H."/>
            <person name="Hiramatsu K."/>
        </authorList>
    </citation>
    <scope>NUCLEOTIDE SEQUENCE [LARGE SCALE GENOMIC DNA]</scope>
    <source>
        <strain>Mu50 / ATCC 700699</strain>
    </source>
</reference>
<name>PPI1_STAAM</name>
<keyword id="KW-0413">Isomerase</keyword>
<keyword id="KW-0697">Rotamase</keyword>
<sequence>MANYPQLNKEVQQGEIKVVMHTNKGDMTFKLFPNIAPKTVENFVTHAKNGYYDGITFHRVINDFMIQGGDPTATGMGGESIYGGAFEDEFSLNAFNLYGALSMANSGPNTNGSQFFIVQMKEVPQNMLSQLADGGWPQPIVDAYGEKGGTPWLDQKHTVFGQIIDGETTLEDIANTKVGPQDKPLHDVVIESIDVEE</sequence>
<organism>
    <name type="scientific">Staphylococcus aureus (strain Mu50 / ATCC 700699)</name>
    <dbReference type="NCBI Taxonomy" id="158878"/>
    <lineage>
        <taxon>Bacteria</taxon>
        <taxon>Bacillati</taxon>
        <taxon>Bacillota</taxon>
        <taxon>Bacilli</taxon>
        <taxon>Bacillales</taxon>
        <taxon>Staphylococcaceae</taxon>
        <taxon>Staphylococcus</taxon>
    </lineage>
</organism>
<evidence type="ECO:0000250" key="1"/>
<evidence type="ECO:0000255" key="2">
    <source>
        <dbReference type="PROSITE-ProRule" id="PRU00156"/>
    </source>
</evidence>
<evidence type="ECO:0000305" key="3"/>
<comment type="function">
    <text evidence="1">PPIases accelerate the folding of proteins. It catalyzes the cis-trans isomerization of proline imidic peptide bonds in oligopeptides (By similarity).</text>
</comment>
<comment type="catalytic activity">
    <reaction>
        <text>[protein]-peptidylproline (omega=180) = [protein]-peptidylproline (omega=0)</text>
        <dbReference type="Rhea" id="RHEA:16237"/>
        <dbReference type="Rhea" id="RHEA-COMP:10747"/>
        <dbReference type="Rhea" id="RHEA-COMP:10748"/>
        <dbReference type="ChEBI" id="CHEBI:83833"/>
        <dbReference type="ChEBI" id="CHEBI:83834"/>
        <dbReference type="EC" id="5.2.1.8"/>
    </reaction>
</comment>
<comment type="similarity">
    <text evidence="3">Belongs to the cyclophilin-type PPIase family.</text>
</comment>
<feature type="chain" id="PRO_0000299083" description="Putative peptidyl-prolyl cis-trans isomerase">
    <location>
        <begin position="1"/>
        <end position="197"/>
    </location>
</feature>
<feature type="domain" description="PPIase cyclophilin-type" evidence="2">
    <location>
        <begin position="14"/>
        <end position="195"/>
    </location>
</feature>
<protein>
    <recommendedName>
        <fullName>Putative peptidyl-prolyl cis-trans isomerase</fullName>
        <shortName>PPIase</shortName>
        <ecNumber>5.2.1.8</ecNumber>
    </recommendedName>
    <alternativeName>
        <fullName>Rotamase</fullName>
    </alternativeName>
</protein>